<reference key="1">
    <citation type="journal article" date="2008" name="J. Bacteriol.">
        <title>Insights into the environmental resistance gene pool from the genome sequence of the multidrug-resistant environmental isolate Escherichia coli SMS-3-5.</title>
        <authorList>
            <person name="Fricke W.F."/>
            <person name="Wright M.S."/>
            <person name="Lindell A.H."/>
            <person name="Harkins D.M."/>
            <person name="Baker-Austin C."/>
            <person name="Ravel J."/>
            <person name="Stepanauskas R."/>
        </authorList>
    </citation>
    <scope>NUCLEOTIDE SEQUENCE [LARGE SCALE GENOMIC DNA]</scope>
    <source>
        <strain>SMS-3-5 / SECEC</strain>
    </source>
</reference>
<protein>
    <recommendedName>
        <fullName evidence="1">UPF0231 protein YacL</fullName>
    </recommendedName>
</protein>
<sequence length="120" mass="13978">MDYEFLRDVTGVVKVRMSMGHEVIGHWFNEEVKENLALLDEVEDAARTLKGSERSWQRAGHEYTLWMDGEEVMVRANQLEFAGDEMEEGMNYYDEESLSLCGVEDFLQVVAAYRNFVQQK</sequence>
<organism>
    <name type="scientific">Escherichia coli (strain SMS-3-5 / SECEC)</name>
    <dbReference type="NCBI Taxonomy" id="439855"/>
    <lineage>
        <taxon>Bacteria</taxon>
        <taxon>Pseudomonadati</taxon>
        <taxon>Pseudomonadota</taxon>
        <taxon>Gammaproteobacteria</taxon>
        <taxon>Enterobacterales</taxon>
        <taxon>Enterobacteriaceae</taxon>
        <taxon>Escherichia</taxon>
    </lineage>
</organism>
<evidence type="ECO:0000255" key="1">
    <source>
        <dbReference type="HAMAP-Rule" id="MF_01053"/>
    </source>
</evidence>
<proteinExistence type="inferred from homology"/>
<accession>B1LGS0</accession>
<gene>
    <name evidence="1" type="primary">yacL</name>
    <name type="ordered locus">EcSMS35_0129</name>
</gene>
<name>YACL_ECOSM</name>
<comment type="similarity">
    <text evidence="1">Belongs to the UPF0231 family.</text>
</comment>
<dbReference type="EMBL" id="CP000970">
    <property type="protein sequence ID" value="ACB18941.1"/>
    <property type="molecule type" value="Genomic_DNA"/>
</dbReference>
<dbReference type="RefSeq" id="WP_012311899.1">
    <property type="nucleotide sequence ID" value="NC_010498.1"/>
</dbReference>
<dbReference type="KEGG" id="ecm:EcSMS35_0129"/>
<dbReference type="HOGENOM" id="CLU_139226_0_0_6"/>
<dbReference type="Proteomes" id="UP000007011">
    <property type="component" value="Chromosome"/>
</dbReference>
<dbReference type="HAMAP" id="MF_01053">
    <property type="entry name" value="UPF0231"/>
    <property type="match status" value="1"/>
</dbReference>
<dbReference type="InterPro" id="IPR008249">
    <property type="entry name" value="UPF0231"/>
</dbReference>
<dbReference type="NCBIfam" id="NF003574">
    <property type="entry name" value="PRK05248.1-1"/>
    <property type="match status" value="1"/>
</dbReference>
<dbReference type="NCBIfam" id="NF003576">
    <property type="entry name" value="PRK05248.1-3"/>
    <property type="match status" value="1"/>
</dbReference>
<dbReference type="Pfam" id="PF06062">
    <property type="entry name" value="UPF0231"/>
    <property type="match status" value="1"/>
</dbReference>
<dbReference type="PIRSF" id="PIRSF006287">
    <property type="entry name" value="UCP006287"/>
    <property type="match status" value="1"/>
</dbReference>
<feature type="chain" id="PRO_1000136296" description="UPF0231 protein YacL">
    <location>
        <begin position="1"/>
        <end position="120"/>
    </location>
</feature>